<protein>
    <recommendedName>
        <fullName evidence="1">CCA-adding enzyme</fullName>
        <ecNumber evidence="1">2.7.7.72</ecNumber>
    </recommendedName>
    <alternativeName>
        <fullName evidence="1">CCA tRNA nucleotidyltransferase</fullName>
    </alternativeName>
    <alternativeName>
        <fullName evidence="1">tRNA CCA-pyrophosphorylase</fullName>
    </alternativeName>
    <alternativeName>
        <fullName evidence="1">tRNA adenylyl-/cytidylyl- transferase</fullName>
    </alternativeName>
    <alternativeName>
        <fullName evidence="1">tRNA nucleotidyltransferase</fullName>
    </alternativeName>
    <alternativeName>
        <fullName evidence="1">tRNA-NT</fullName>
    </alternativeName>
</protein>
<feature type="chain" id="PRO_0000139069" description="CCA-adding enzyme">
    <location>
        <begin position="1"/>
        <end position="449"/>
    </location>
</feature>
<feature type="binding site" evidence="1">
    <location>
        <position position="57"/>
    </location>
    <ligand>
        <name>ATP</name>
        <dbReference type="ChEBI" id="CHEBI:30616"/>
    </ligand>
</feature>
<feature type="binding site" evidence="1">
    <location>
        <position position="57"/>
    </location>
    <ligand>
        <name>CTP</name>
        <dbReference type="ChEBI" id="CHEBI:37563"/>
    </ligand>
</feature>
<feature type="binding site" evidence="1">
    <location>
        <position position="60"/>
    </location>
    <ligand>
        <name>ATP</name>
        <dbReference type="ChEBI" id="CHEBI:30616"/>
    </ligand>
</feature>
<feature type="binding site" evidence="1">
    <location>
        <position position="60"/>
    </location>
    <ligand>
        <name>CTP</name>
        <dbReference type="ChEBI" id="CHEBI:37563"/>
    </ligand>
</feature>
<feature type="binding site" evidence="1">
    <location>
        <position position="69"/>
    </location>
    <ligand>
        <name>Mg(2+)</name>
        <dbReference type="ChEBI" id="CHEBI:18420"/>
    </ligand>
</feature>
<feature type="binding site" evidence="1">
    <location>
        <position position="71"/>
    </location>
    <ligand>
        <name>Mg(2+)</name>
        <dbReference type="ChEBI" id="CHEBI:18420"/>
    </ligand>
</feature>
<feature type="binding site" evidence="1">
    <location>
        <position position="124"/>
    </location>
    <ligand>
        <name>Mg(2+)</name>
        <dbReference type="ChEBI" id="CHEBI:18420"/>
    </ligand>
</feature>
<feature type="binding site" evidence="1">
    <location>
        <position position="147"/>
    </location>
    <ligand>
        <name>ATP</name>
        <dbReference type="ChEBI" id="CHEBI:30616"/>
    </ligand>
</feature>
<feature type="binding site" evidence="1">
    <location>
        <position position="147"/>
    </location>
    <ligand>
        <name>CTP</name>
        <dbReference type="ChEBI" id="CHEBI:37563"/>
    </ligand>
</feature>
<feature type="binding site" evidence="1">
    <location>
        <position position="167"/>
    </location>
    <ligand>
        <name>ATP</name>
        <dbReference type="ChEBI" id="CHEBI:30616"/>
    </ligand>
</feature>
<feature type="binding site" evidence="1">
    <location>
        <position position="167"/>
    </location>
    <ligand>
        <name>CTP</name>
        <dbReference type="ChEBI" id="CHEBI:37563"/>
    </ligand>
</feature>
<feature type="binding site" evidence="1">
    <location>
        <position position="176"/>
    </location>
    <ligand>
        <name>ATP</name>
        <dbReference type="ChEBI" id="CHEBI:30616"/>
    </ligand>
</feature>
<feature type="binding site" evidence="1">
    <location>
        <position position="176"/>
    </location>
    <ligand>
        <name>CTP</name>
        <dbReference type="ChEBI" id="CHEBI:37563"/>
    </ligand>
</feature>
<feature type="mutagenesis site" description="Loss of both AMP and CMP incorporation." evidence="2">
    <original>R</original>
    <variation>A</variation>
    <location>
        <position position="164"/>
    </location>
</feature>
<feature type="mutagenesis site" description="Loss of AMP incorporation and high decrease in CMP incorporation." evidence="2">
    <original>K</original>
    <variation>A</variation>
    <location>
        <position position="167"/>
    </location>
</feature>
<feature type="mutagenesis site" description="No decrease in both AMP and CMP incorporation." evidence="2">
    <original>K</original>
    <variation>A</variation>
    <location>
        <position position="171"/>
    </location>
</feature>
<dbReference type="EC" id="2.7.7.72" evidence="1"/>
<dbReference type="EMBL" id="L77117">
    <property type="protein sequence ID" value="AAB99114.1"/>
    <property type="molecule type" value="Genomic_DNA"/>
</dbReference>
<dbReference type="RefSeq" id="WP_010870623.1">
    <property type="nucleotide sequence ID" value="NC_000909.1"/>
</dbReference>
<dbReference type="SMR" id="Q58511"/>
<dbReference type="FunCoup" id="Q58511">
    <property type="interactions" value="5"/>
</dbReference>
<dbReference type="STRING" id="243232.MJ_1111"/>
<dbReference type="PaxDb" id="243232-MJ_1111"/>
<dbReference type="EnsemblBacteria" id="AAB99114">
    <property type="protein sequence ID" value="AAB99114"/>
    <property type="gene ID" value="MJ_1111"/>
</dbReference>
<dbReference type="GeneID" id="1452008"/>
<dbReference type="KEGG" id="mja:MJ_1111"/>
<dbReference type="eggNOG" id="arCOG04249">
    <property type="taxonomic scope" value="Archaea"/>
</dbReference>
<dbReference type="HOGENOM" id="CLU_044679_1_0_2"/>
<dbReference type="InParanoid" id="Q58511"/>
<dbReference type="OrthoDB" id="7378at2157"/>
<dbReference type="PhylomeDB" id="Q58511"/>
<dbReference type="SABIO-RK" id="Q58511"/>
<dbReference type="Proteomes" id="UP000000805">
    <property type="component" value="Chromosome"/>
</dbReference>
<dbReference type="GO" id="GO:0005524">
    <property type="term" value="F:ATP binding"/>
    <property type="evidence" value="ECO:0007669"/>
    <property type="project" value="UniProtKB-UniRule"/>
</dbReference>
<dbReference type="GO" id="GO:0004810">
    <property type="term" value="F:CCA tRNA nucleotidyltransferase activity"/>
    <property type="evidence" value="ECO:0007669"/>
    <property type="project" value="UniProtKB-UniRule"/>
</dbReference>
<dbReference type="GO" id="GO:0000287">
    <property type="term" value="F:magnesium ion binding"/>
    <property type="evidence" value="ECO:0007669"/>
    <property type="project" value="UniProtKB-UniRule"/>
</dbReference>
<dbReference type="GO" id="GO:0000049">
    <property type="term" value="F:tRNA binding"/>
    <property type="evidence" value="ECO:0007669"/>
    <property type="project" value="UniProtKB-UniRule"/>
</dbReference>
<dbReference type="GO" id="GO:0042245">
    <property type="term" value="P:RNA repair"/>
    <property type="evidence" value="ECO:0007669"/>
    <property type="project" value="UniProtKB-KW"/>
</dbReference>
<dbReference type="GO" id="GO:0001680">
    <property type="term" value="P:tRNA 3'-terminal CCA addition"/>
    <property type="evidence" value="ECO:0007669"/>
    <property type="project" value="UniProtKB-UniRule"/>
</dbReference>
<dbReference type="CDD" id="cd05400">
    <property type="entry name" value="NT_2-5OAS_ClassI-CCAase"/>
    <property type="match status" value="1"/>
</dbReference>
<dbReference type="Gene3D" id="3.30.460.10">
    <property type="entry name" value="Beta Polymerase, domain 2"/>
    <property type="match status" value="1"/>
</dbReference>
<dbReference type="Gene3D" id="1.10.1410.30">
    <property type="entry name" value="CCA tRNA nucleotidyltransferase, domain 2"/>
    <property type="match status" value="1"/>
</dbReference>
<dbReference type="Gene3D" id="3.30.70.590">
    <property type="entry name" value="Poly(A) polymerase predicted RNA binding domain"/>
    <property type="match status" value="1"/>
</dbReference>
<dbReference type="HAMAP" id="MF_01264">
    <property type="entry name" value="CCA_arch"/>
    <property type="match status" value="1"/>
</dbReference>
<dbReference type="InterPro" id="IPR048833">
    <property type="entry name" value="CAA_C"/>
</dbReference>
<dbReference type="InterPro" id="IPR008229">
    <property type="entry name" value="CCA-adding_arc"/>
</dbReference>
<dbReference type="InterPro" id="IPR042090">
    <property type="entry name" value="CCA_tRNA_nucleotrans_2"/>
</dbReference>
<dbReference type="InterPro" id="IPR006116">
    <property type="entry name" value="NT_2-5OAS_ClassI-CCAase"/>
</dbReference>
<dbReference type="InterPro" id="IPR043519">
    <property type="entry name" value="NT_sf"/>
</dbReference>
<dbReference type="InterPro" id="IPR011068">
    <property type="entry name" value="NuclTrfase_I-like_C"/>
</dbReference>
<dbReference type="InterPro" id="IPR002934">
    <property type="entry name" value="Polymerase_NTP_transf_dom"/>
</dbReference>
<dbReference type="InterPro" id="IPR015329">
    <property type="entry name" value="tRNA_NucTransf2"/>
</dbReference>
<dbReference type="NCBIfam" id="TIGR03671">
    <property type="entry name" value="cca_archaeal"/>
    <property type="match status" value="1"/>
</dbReference>
<dbReference type="PANTHER" id="PTHR39643">
    <property type="entry name" value="CCA-ADDING ENZYME"/>
    <property type="match status" value="1"/>
</dbReference>
<dbReference type="PANTHER" id="PTHR39643:SF1">
    <property type="entry name" value="CCA-ADDING ENZYME"/>
    <property type="match status" value="1"/>
</dbReference>
<dbReference type="Pfam" id="PF21133">
    <property type="entry name" value="CAA_C"/>
    <property type="match status" value="1"/>
</dbReference>
<dbReference type="Pfam" id="PF01909">
    <property type="entry name" value="NTP_transf_2"/>
    <property type="match status" value="1"/>
</dbReference>
<dbReference type="Pfam" id="PF09249">
    <property type="entry name" value="tRNA_NucTransf2"/>
    <property type="match status" value="1"/>
</dbReference>
<dbReference type="PIRSF" id="PIRSF005335">
    <property type="entry name" value="CCA_arch"/>
    <property type="match status" value="1"/>
</dbReference>
<dbReference type="SUPFAM" id="SSF81301">
    <property type="entry name" value="Nucleotidyltransferase"/>
    <property type="match status" value="1"/>
</dbReference>
<dbReference type="SUPFAM" id="SSF55003">
    <property type="entry name" value="PAP/Archaeal CCA-adding enzyme, C-terminal domain"/>
    <property type="match status" value="1"/>
</dbReference>
<dbReference type="SUPFAM" id="SSF81631">
    <property type="entry name" value="PAP/OAS1 substrate-binding domain"/>
    <property type="match status" value="1"/>
</dbReference>
<keyword id="KW-0067">ATP-binding</keyword>
<keyword id="KW-0460">Magnesium</keyword>
<keyword id="KW-0479">Metal-binding</keyword>
<keyword id="KW-0547">Nucleotide-binding</keyword>
<keyword id="KW-0548">Nucleotidyltransferase</keyword>
<keyword id="KW-1185">Reference proteome</keyword>
<keyword id="KW-0692">RNA repair</keyword>
<keyword id="KW-0694">RNA-binding</keyword>
<keyword id="KW-0808">Transferase</keyword>
<keyword id="KW-0819">tRNA processing</keyword>
<organism>
    <name type="scientific">Methanocaldococcus jannaschii (strain ATCC 43067 / DSM 2661 / JAL-1 / JCM 10045 / NBRC 100440)</name>
    <name type="common">Methanococcus jannaschii</name>
    <dbReference type="NCBI Taxonomy" id="243232"/>
    <lineage>
        <taxon>Archaea</taxon>
        <taxon>Methanobacteriati</taxon>
        <taxon>Methanobacteriota</taxon>
        <taxon>Methanomada group</taxon>
        <taxon>Methanococci</taxon>
        <taxon>Methanococcales</taxon>
        <taxon>Methanocaldococcaceae</taxon>
        <taxon>Methanocaldococcus</taxon>
    </lineage>
</organism>
<evidence type="ECO:0000255" key="1">
    <source>
        <dbReference type="HAMAP-Rule" id="MF_01264"/>
    </source>
</evidence>
<evidence type="ECO:0000269" key="2">
    <source>
    </source>
</evidence>
<evidence type="ECO:0000305" key="3"/>
<proteinExistence type="evidence at protein level"/>
<name>CCA_METJA</name>
<comment type="function">
    <text evidence="1 2">Catalyzes the addition and repair of the essential 3'-terminal CCA sequence in tRNAs without using a nucleic acid template. Adds these three nucleotides in the order of C, C, and A to the tRNA nucleotide-73, using CTP and ATP as substrates and producing inorganic pyrophosphate (PubMed:12866049). tRNA 3'-terminal CCA addition is required both for tRNA processing and repair. Also involved in tRNA surveillance by mediating tandem CCA addition to generate a CCACCA at the 3' terminus of unstable tRNAs. While stable tRNAs receive only 3'-terminal CCA, unstable tRNAs are marked with CCACCA and rapidly degraded (By similarity).</text>
</comment>
<comment type="catalytic activity">
    <reaction evidence="1">
        <text>a tRNA precursor + 2 CTP + ATP = a tRNA with a 3' CCA end + 3 diphosphate</text>
        <dbReference type="Rhea" id="RHEA:14433"/>
        <dbReference type="Rhea" id="RHEA-COMP:10465"/>
        <dbReference type="Rhea" id="RHEA-COMP:10468"/>
        <dbReference type="ChEBI" id="CHEBI:30616"/>
        <dbReference type="ChEBI" id="CHEBI:33019"/>
        <dbReference type="ChEBI" id="CHEBI:37563"/>
        <dbReference type="ChEBI" id="CHEBI:74896"/>
        <dbReference type="ChEBI" id="CHEBI:83071"/>
        <dbReference type="EC" id="2.7.7.72"/>
    </reaction>
</comment>
<comment type="catalytic activity">
    <reaction evidence="1">
        <text>a tRNA with a 3' CCA end + 2 CTP + ATP = a tRNA with a 3' CCACCA end + 3 diphosphate</text>
        <dbReference type="Rhea" id="RHEA:76235"/>
        <dbReference type="Rhea" id="RHEA-COMP:10468"/>
        <dbReference type="Rhea" id="RHEA-COMP:18655"/>
        <dbReference type="ChEBI" id="CHEBI:30616"/>
        <dbReference type="ChEBI" id="CHEBI:33019"/>
        <dbReference type="ChEBI" id="CHEBI:37563"/>
        <dbReference type="ChEBI" id="CHEBI:83071"/>
        <dbReference type="ChEBI" id="CHEBI:195187"/>
    </reaction>
    <physiologicalReaction direction="left-to-right" evidence="1">
        <dbReference type="Rhea" id="RHEA:76236"/>
    </physiologicalReaction>
</comment>
<comment type="cofactor">
    <cofactor evidence="1">
        <name>Mg(2+)</name>
        <dbReference type="ChEBI" id="CHEBI:18420"/>
    </cofactor>
</comment>
<comment type="biophysicochemical properties">
    <kinetics>
        <KM evidence="2">21 uM for ATP</KM>
        <KM evidence="2">38 uM for CTP</KM>
    </kinetics>
</comment>
<comment type="subunit">
    <text evidence="1">Homodimer.</text>
</comment>
<comment type="miscellaneous">
    <text evidence="1">A single active site specifically recognizes both ATP and CTP and is responsible for their addition.</text>
</comment>
<comment type="similarity">
    <text evidence="1 3">Belongs to the tRNA nucleotidyltransferase/poly(A) polymerase family. Archaeal CCA-adding enzyme subfamily.</text>
</comment>
<sequence length="449" mass="52784">MIVLTIEEILKEVLNEIKPSKEDMEKLQLKANEIIDKIWEIVRENSYPILEVLLVGSSARNTNLKDDYDIDIFVLFDKSVSEDELEEIGLKIGTEAIKRLNGSYNINYASHPYVNGEVDGYEVDIVPCYKIDFGEKIISAVDRTPLHHKFLISRLNERLCDEVRLLKAFLKSLGLYGSDVKTKGFSGYLCELLILHYGSFINLLKEAQNWRIGKKIILKDIFEIYKDVDINKLKKFDEPFIVYDPVDLNRNVASPLSKDNFCRFIFYSRQFLKNPSIEFFKDYAKKLEEILENREHGYRLILKIPRENVVDDIIYPQMEKLQKSINKVIVKNEFVILNSKCFADDNYCYLYWEFLVYELPKIALREGPPVFEKERAERFLKKYGKVFIRDCKLFAYTEREYSHIIDLFKDIVNGNLQNISIPKYVNPRNGKIIELNSHGEHKQFNKECQ</sequence>
<gene>
    <name evidence="1" type="primary">cca</name>
    <name type="ordered locus">MJ1111</name>
</gene>
<accession>Q58511</accession>
<accession>Q58512</accession>
<reference key="1">
    <citation type="journal article" date="1996" name="Science">
        <title>Complete genome sequence of the methanogenic archaeon, Methanococcus jannaschii.</title>
        <authorList>
            <person name="Bult C.J."/>
            <person name="White O."/>
            <person name="Olsen G.J."/>
            <person name="Zhou L."/>
            <person name="Fleischmann R.D."/>
            <person name="Sutton G.G."/>
            <person name="Blake J.A."/>
            <person name="FitzGerald L.M."/>
            <person name="Clayton R.A."/>
            <person name="Gocayne J.D."/>
            <person name="Kerlavage A.R."/>
            <person name="Dougherty B.A."/>
            <person name="Tomb J.-F."/>
            <person name="Adams M.D."/>
            <person name="Reich C.I."/>
            <person name="Overbeek R."/>
            <person name="Kirkness E.F."/>
            <person name="Weinstock K.G."/>
            <person name="Merrick J.M."/>
            <person name="Glodek A."/>
            <person name="Scott J.L."/>
            <person name="Geoghagen N.S.M."/>
            <person name="Weidman J.F."/>
            <person name="Fuhrmann J.L."/>
            <person name="Nguyen D."/>
            <person name="Utterback T.R."/>
            <person name="Kelley J.M."/>
            <person name="Peterson J.D."/>
            <person name="Sadow P.W."/>
            <person name="Hanna M.C."/>
            <person name="Cotton M.D."/>
            <person name="Roberts K.M."/>
            <person name="Hurst M.A."/>
            <person name="Kaine B.P."/>
            <person name="Borodovsky M."/>
            <person name="Klenk H.-P."/>
            <person name="Fraser C.M."/>
            <person name="Smith H.O."/>
            <person name="Woese C.R."/>
            <person name="Venter J.C."/>
        </authorList>
    </citation>
    <scope>NUCLEOTIDE SEQUENCE [LARGE SCALE GENOMIC DNA]</scope>
    <source>
        <strain>ATCC 43067 / DSM 2661 / JAL-1 / JCM 10045 / NBRC 100440</strain>
    </source>
</reference>
<reference key="2">
    <citation type="submission" date="1998-02" db="EMBL/GenBank/DDBJ databases">
        <authorList>
            <person name="Bult C.J."/>
            <person name="White O."/>
            <person name="Olsen G.J."/>
            <person name="Zhou L."/>
            <person name="Fleischmann R.D."/>
            <person name="Sutton G.G."/>
            <person name="Blake J.A."/>
            <person name="FitzGerald L.M."/>
            <person name="Clayton R.A."/>
            <person name="Gocayne J.D."/>
            <person name="Kerlavage A.R."/>
            <person name="Dougherty B.A."/>
            <person name="Tomb J.-F."/>
            <person name="Adams M.D."/>
            <person name="Reich C.I."/>
            <person name="Overbeek R."/>
            <person name="Kirkness E.F."/>
            <person name="Weinstock K.G."/>
            <person name="Merrick J.M."/>
            <person name="Glodek A."/>
            <person name="Scott J.L."/>
            <person name="Geoghagen N.S.M."/>
            <person name="Weidman J.F."/>
            <person name="Fuhrmann J.L."/>
            <person name="Nguyen D."/>
            <person name="Utterback T.R."/>
            <person name="Kelley J.M."/>
            <person name="Peterson J.D."/>
            <person name="Sadow P.W."/>
            <person name="Hanna M.C."/>
            <person name="Cotton M.D."/>
            <person name="Roberts K.M."/>
            <person name="Hurst M.A."/>
            <person name="Kaine B.P."/>
            <person name="Borodovsky M."/>
            <person name="Klenk H.-P."/>
            <person name="Fraser C.M."/>
            <person name="Smith H.O."/>
            <person name="Woese C.R."/>
            <person name="Venter J.C."/>
        </authorList>
    </citation>
    <scope>SEQUENCE REVISION</scope>
</reference>
<reference key="3">
    <citation type="journal article" date="2003" name="Proteins">
        <title>Fold recognition, homology modeling, docking simulations, kinetics analysis and mutagenesis of ATP/CTP:tRNA nucleotidyltransferase from Methanococcus jannaschii.</title>
        <authorList>
            <person name="Bujnicki J.M."/>
            <person name="Albert M.A."/>
            <person name="Nelson D.J."/>
            <person name="Thurlow D.L."/>
        </authorList>
    </citation>
    <scope>FUNCTION</scope>
    <scope>KINETIC PARAMETERS</scope>
    <scope>3D-STRUCTURE MODELING</scope>
    <scope>MUTAGENESIS OF ARG-164; LYS-167 AND LYS-171</scope>
    <source>
        <strain>ATCC 43067 / DSM 2661 / JAL-1 / JCM 10045 / NBRC 100440</strain>
    </source>
</reference>